<protein>
    <recommendedName>
        <fullName evidence="1">Large ribosomal subunit protein bL9</fullName>
    </recommendedName>
    <alternativeName>
        <fullName evidence="2">50S ribosomal protein L9</fullName>
    </alternativeName>
</protein>
<feature type="chain" id="PRO_1000060508" description="Large ribosomal subunit protein bL9">
    <location>
        <begin position="1"/>
        <end position="149"/>
    </location>
</feature>
<reference key="1">
    <citation type="journal article" date="2010" name="PLoS Genet.">
        <title>Genome sequence of the plant growth promoting endophytic bacterium Enterobacter sp. 638.</title>
        <authorList>
            <person name="Taghavi S."/>
            <person name="van der Lelie D."/>
            <person name="Hoffman A."/>
            <person name="Zhang Y.B."/>
            <person name="Walla M.D."/>
            <person name="Vangronsveld J."/>
            <person name="Newman L."/>
            <person name="Monchy S."/>
        </authorList>
    </citation>
    <scope>NUCLEOTIDE SEQUENCE [LARGE SCALE GENOMIC DNA]</scope>
    <source>
        <strain>638</strain>
    </source>
</reference>
<dbReference type="EMBL" id="CP000653">
    <property type="protein sequence ID" value="ABP59062.1"/>
    <property type="molecule type" value="Genomic_DNA"/>
</dbReference>
<dbReference type="RefSeq" id="WP_012015787.1">
    <property type="nucleotide sequence ID" value="NC_009436.1"/>
</dbReference>
<dbReference type="SMR" id="A4W5T2"/>
<dbReference type="STRING" id="399742.Ent638_0374"/>
<dbReference type="KEGG" id="ent:Ent638_0374"/>
<dbReference type="eggNOG" id="COG0359">
    <property type="taxonomic scope" value="Bacteria"/>
</dbReference>
<dbReference type="HOGENOM" id="CLU_078938_4_1_6"/>
<dbReference type="OrthoDB" id="9788336at2"/>
<dbReference type="Proteomes" id="UP000000230">
    <property type="component" value="Chromosome"/>
</dbReference>
<dbReference type="GO" id="GO:1990904">
    <property type="term" value="C:ribonucleoprotein complex"/>
    <property type="evidence" value="ECO:0007669"/>
    <property type="project" value="UniProtKB-KW"/>
</dbReference>
<dbReference type="GO" id="GO:0005840">
    <property type="term" value="C:ribosome"/>
    <property type="evidence" value="ECO:0007669"/>
    <property type="project" value="UniProtKB-KW"/>
</dbReference>
<dbReference type="GO" id="GO:0019843">
    <property type="term" value="F:rRNA binding"/>
    <property type="evidence" value="ECO:0007669"/>
    <property type="project" value="UniProtKB-UniRule"/>
</dbReference>
<dbReference type="GO" id="GO:0003735">
    <property type="term" value="F:structural constituent of ribosome"/>
    <property type="evidence" value="ECO:0007669"/>
    <property type="project" value="InterPro"/>
</dbReference>
<dbReference type="GO" id="GO:0006412">
    <property type="term" value="P:translation"/>
    <property type="evidence" value="ECO:0007669"/>
    <property type="project" value="UniProtKB-UniRule"/>
</dbReference>
<dbReference type="FunFam" id="3.10.430.100:FF:000001">
    <property type="entry name" value="50S ribosomal protein L9"/>
    <property type="match status" value="1"/>
</dbReference>
<dbReference type="FunFam" id="3.40.5.10:FF:000001">
    <property type="entry name" value="50S ribosomal protein L9"/>
    <property type="match status" value="1"/>
</dbReference>
<dbReference type="Gene3D" id="3.10.430.100">
    <property type="entry name" value="Ribosomal protein L9, C-terminal domain"/>
    <property type="match status" value="1"/>
</dbReference>
<dbReference type="Gene3D" id="3.40.5.10">
    <property type="entry name" value="Ribosomal protein L9, N-terminal domain"/>
    <property type="match status" value="1"/>
</dbReference>
<dbReference type="HAMAP" id="MF_00503">
    <property type="entry name" value="Ribosomal_bL9"/>
    <property type="match status" value="1"/>
</dbReference>
<dbReference type="InterPro" id="IPR000244">
    <property type="entry name" value="Ribosomal_bL9"/>
</dbReference>
<dbReference type="InterPro" id="IPR009027">
    <property type="entry name" value="Ribosomal_bL9/RNase_H1_N"/>
</dbReference>
<dbReference type="InterPro" id="IPR020594">
    <property type="entry name" value="Ribosomal_bL9_bac/chp"/>
</dbReference>
<dbReference type="InterPro" id="IPR020069">
    <property type="entry name" value="Ribosomal_bL9_C"/>
</dbReference>
<dbReference type="InterPro" id="IPR036791">
    <property type="entry name" value="Ribosomal_bL9_C_sf"/>
</dbReference>
<dbReference type="InterPro" id="IPR020070">
    <property type="entry name" value="Ribosomal_bL9_N"/>
</dbReference>
<dbReference type="InterPro" id="IPR036935">
    <property type="entry name" value="Ribosomal_bL9_N_sf"/>
</dbReference>
<dbReference type="NCBIfam" id="TIGR00158">
    <property type="entry name" value="L9"/>
    <property type="match status" value="1"/>
</dbReference>
<dbReference type="PANTHER" id="PTHR21368">
    <property type="entry name" value="50S RIBOSOMAL PROTEIN L9"/>
    <property type="match status" value="1"/>
</dbReference>
<dbReference type="Pfam" id="PF03948">
    <property type="entry name" value="Ribosomal_L9_C"/>
    <property type="match status" value="1"/>
</dbReference>
<dbReference type="Pfam" id="PF01281">
    <property type="entry name" value="Ribosomal_L9_N"/>
    <property type="match status" value="1"/>
</dbReference>
<dbReference type="SUPFAM" id="SSF55658">
    <property type="entry name" value="L9 N-domain-like"/>
    <property type="match status" value="1"/>
</dbReference>
<dbReference type="SUPFAM" id="SSF55653">
    <property type="entry name" value="Ribosomal protein L9 C-domain"/>
    <property type="match status" value="1"/>
</dbReference>
<dbReference type="PROSITE" id="PS00651">
    <property type="entry name" value="RIBOSOMAL_L9"/>
    <property type="match status" value="1"/>
</dbReference>
<evidence type="ECO:0000255" key="1">
    <source>
        <dbReference type="HAMAP-Rule" id="MF_00503"/>
    </source>
</evidence>
<evidence type="ECO:0000305" key="2"/>
<comment type="function">
    <text evidence="1">Binds to the 23S rRNA.</text>
</comment>
<comment type="similarity">
    <text evidence="1">Belongs to the bacterial ribosomal protein bL9 family.</text>
</comment>
<proteinExistence type="inferred from homology"/>
<gene>
    <name evidence="1" type="primary">rplI</name>
    <name type="ordered locus">Ent638_0374</name>
</gene>
<sequence>MQVILLDKVANLGSLGDQVNVKAGYARNFLVPQGKAVPATKKNVEFFEARRAELEAKLADVLAAANARAEAINALGTVTIASKSGDEGKLFGSIGTRDIADAVTAAGVDVAKSEVRMPNGVLRTTGEHEVDFQVHSEVFAKLVVNVVAE</sequence>
<name>RL9_ENT38</name>
<organism>
    <name type="scientific">Enterobacter sp. (strain 638)</name>
    <dbReference type="NCBI Taxonomy" id="399742"/>
    <lineage>
        <taxon>Bacteria</taxon>
        <taxon>Pseudomonadati</taxon>
        <taxon>Pseudomonadota</taxon>
        <taxon>Gammaproteobacteria</taxon>
        <taxon>Enterobacterales</taxon>
        <taxon>Enterobacteriaceae</taxon>
        <taxon>Enterobacter</taxon>
    </lineage>
</organism>
<accession>A4W5T2</accession>
<keyword id="KW-0687">Ribonucleoprotein</keyword>
<keyword id="KW-0689">Ribosomal protein</keyword>
<keyword id="KW-0694">RNA-binding</keyword>
<keyword id="KW-0699">rRNA-binding</keyword>